<keyword id="KW-0002">3D-structure</keyword>
<keyword id="KW-0009">Actin-binding</keyword>
<keyword id="KW-0025">Alternative splicing</keyword>
<keyword id="KW-0965">Cell junction</keyword>
<keyword id="KW-0963">Cytoplasm</keyword>
<keyword id="KW-0968">Cytoplasmic vesicle</keyword>
<keyword id="KW-0206">Cytoskeleton</keyword>
<keyword id="KW-0221">Differentiation</keyword>
<keyword id="KW-0378">Hydrolase</keyword>
<keyword id="KW-0597">Phosphoprotein</keyword>
<keyword id="KW-0904">Protein phosphatase</keyword>
<keyword id="KW-1267">Proteomics identification</keyword>
<keyword id="KW-1185">Reference proteome</keyword>
<keyword id="KW-0744">Spermatogenesis</keyword>
<organism>
    <name type="scientific">Homo sapiens</name>
    <name type="common">Human</name>
    <dbReference type="NCBI Taxonomy" id="9606"/>
    <lineage>
        <taxon>Eukaryota</taxon>
        <taxon>Metazoa</taxon>
        <taxon>Chordata</taxon>
        <taxon>Craniata</taxon>
        <taxon>Vertebrata</taxon>
        <taxon>Euteleostomi</taxon>
        <taxon>Mammalia</taxon>
        <taxon>Eutheria</taxon>
        <taxon>Euarchontoglires</taxon>
        <taxon>Primates</taxon>
        <taxon>Haplorrhini</taxon>
        <taxon>Catarrhini</taxon>
        <taxon>Hominidae</taxon>
        <taxon>Homo</taxon>
    </lineage>
</organism>
<name>SSH2_HUMAN</name>
<evidence type="ECO:0000250" key="1">
    <source>
        <dbReference type="UniProtKB" id="Q5SW75"/>
    </source>
</evidence>
<evidence type="ECO:0000255" key="2">
    <source>
        <dbReference type="PROSITE-ProRule" id="PRU00160"/>
    </source>
</evidence>
<evidence type="ECO:0000255" key="3">
    <source>
        <dbReference type="PROSITE-ProRule" id="PRU01342"/>
    </source>
</evidence>
<evidence type="ECO:0000255" key="4">
    <source>
        <dbReference type="PROSITE-ProRule" id="PRU10044"/>
    </source>
</evidence>
<evidence type="ECO:0000256" key="5">
    <source>
        <dbReference type="SAM" id="MobiDB-lite"/>
    </source>
</evidence>
<evidence type="ECO:0000269" key="6">
    <source>
    </source>
</evidence>
<evidence type="ECO:0000269" key="7">
    <source>
    </source>
</evidence>
<evidence type="ECO:0000303" key="8">
    <source>
    </source>
</evidence>
<evidence type="ECO:0000303" key="9">
    <source>
    </source>
</evidence>
<evidence type="ECO:0000305" key="10"/>
<evidence type="ECO:0007744" key="11">
    <source>
    </source>
</evidence>
<evidence type="ECO:0007744" key="12">
    <source>
    </source>
</evidence>
<evidence type="ECO:0007744" key="13">
    <source>
    </source>
</evidence>
<evidence type="ECO:0007829" key="14">
    <source>
        <dbReference type="PDB" id="2NT2"/>
    </source>
</evidence>
<feature type="chain" id="PRO_0000094843" description="Protein phosphatase Slingshot homolog 2">
    <location>
        <begin position="1"/>
        <end position="1423"/>
    </location>
</feature>
<feature type="domain" description="DEK-C" evidence="3">
    <location>
        <begin position="248"/>
        <end position="303"/>
    </location>
</feature>
<feature type="domain" description="Tyrosine-protein phosphatase" evidence="2">
    <location>
        <begin position="307"/>
        <end position="448"/>
    </location>
</feature>
<feature type="region of interest" description="Disordered" evidence="5">
    <location>
        <begin position="1"/>
        <end position="37"/>
    </location>
</feature>
<feature type="region of interest" description="Disordered" evidence="5">
    <location>
        <begin position="617"/>
        <end position="641"/>
    </location>
</feature>
<feature type="region of interest" description="Disordered" evidence="5">
    <location>
        <begin position="664"/>
        <end position="684"/>
    </location>
</feature>
<feature type="region of interest" description="Disordered" evidence="5">
    <location>
        <begin position="696"/>
        <end position="728"/>
    </location>
</feature>
<feature type="region of interest" description="Disordered" evidence="5">
    <location>
        <begin position="797"/>
        <end position="825"/>
    </location>
</feature>
<feature type="region of interest" description="Disordered" evidence="5">
    <location>
        <begin position="840"/>
        <end position="862"/>
    </location>
</feature>
<feature type="region of interest" description="Disordered" evidence="5">
    <location>
        <begin position="877"/>
        <end position="954"/>
    </location>
</feature>
<feature type="region of interest" description="Disordered" evidence="5">
    <location>
        <begin position="962"/>
        <end position="981"/>
    </location>
</feature>
<feature type="region of interest" description="Disordered" evidence="5">
    <location>
        <begin position="1019"/>
        <end position="1041"/>
    </location>
</feature>
<feature type="region of interest" description="Disordered" evidence="5">
    <location>
        <begin position="1070"/>
        <end position="1108"/>
    </location>
</feature>
<feature type="region of interest" description="Disordered" evidence="5">
    <location>
        <begin position="1144"/>
        <end position="1179"/>
    </location>
</feature>
<feature type="compositionally biased region" description="Low complexity" evidence="5">
    <location>
        <begin position="9"/>
        <end position="18"/>
    </location>
</feature>
<feature type="compositionally biased region" description="Pro residues" evidence="5">
    <location>
        <begin position="621"/>
        <end position="635"/>
    </location>
</feature>
<feature type="compositionally biased region" description="Basic and acidic residues" evidence="5">
    <location>
        <begin position="664"/>
        <end position="680"/>
    </location>
</feature>
<feature type="compositionally biased region" description="Polar residues" evidence="5">
    <location>
        <begin position="889"/>
        <end position="904"/>
    </location>
</feature>
<feature type="compositionally biased region" description="Basic and acidic residues" evidence="5">
    <location>
        <begin position="910"/>
        <end position="932"/>
    </location>
</feature>
<feature type="compositionally biased region" description="Polar residues" evidence="5">
    <location>
        <begin position="941"/>
        <end position="953"/>
    </location>
</feature>
<feature type="compositionally biased region" description="Polar residues" evidence="5">
    <location>
        <begin position="1019"/>
        <end position="1034"/>
    </location>
</feature>
<feature type="compositionally biased region" description="Polar residues" evidence="5">
    <location>
        <begin position="1144"/>
        <end position="1172"/>
    </location>
</feature>
<feature type="active site" description="Phosphocysteine intermediate" evidence="2 7">
    <location>
        <position position="392"/>
    </location>
</feature>
<feature type="modified residue" description="Phosphoserine" evidence="1">
    <location>
        <position position="17"/>
    </location>
</feature>
<feature type="modified residue" description="Phosphoserine" evidence="1">
    <location>
        <position position="25"/>
    </location>
</feature>
<feature type="modified residue" description="Phosphoserine" evidence="11 13">
    <location>
        <position position="36"/>
    </location>
</feature>
<feature type="modified residue" description="Phosphoserine" evidence="1">
    <location>
        <position position="461"/>
    </location>
</feature>
<feature type="modified residue" description="Phosphoserine" evidence="12">
    <location>
        <position position="487"/>
    </location>
</feature>
<feature type="modified residue" description="Phosphoserine" evidence="1">
    <location>
        <position position="534"/>
    </location>
</feature>
<feature type="modified residue" description="Phosphoserine" evidence="1">
    <location>
        <position position="631"/>
    </location>
</feature>
<feature type="modified residue" description="Phosphoserine" evidence="1">
    <location>
        <position position="633"/>
    </location>
</feature>
<feature type="modified residue" description="Phosphoserine" evidence="13">
    <location>
        <position position="1217"/>
    </location>
</feature>
<feature type="modified residue" description="Phosphothreonine" evidence="11 12">
    <location>
        <position position="1422"/>
    </location>
</feature>
<feature type="splice variant" id="VSP_016321" description="In isoform 2." evidence="9">
    <original>MALVTVQRSPTPSTTSSPCASEADSGEEECRSQPRS</original>
    <variation>MTLSTLARKRKAPLACTCSLGGPDMIPYFSANAVISQNAINQL</variation>
    <location>
        <begin position="1"/>
        <end position="36"/>
    </location>
</feature>
<feature type="splice variant" id="VSP_016322" description="In isoform 2 and isoform 3." evidence="8 9">
    <original>SALQSLHKACEVARAHN</original>
    <variation>VDRDSRNKHCYVLLVEE</variation>
    <location>
        <begin position="179"/>
        <end position="195"/>
    </location>
</feature>
<feature type="splice variant" id="VSP_016323" description="In isoform 2 and isoform 3." evidence="8 9">
    <location>
        <begin position="196"/>
        <end position="1423"/>
    </location>
</feature>
<feature type="splice variant" id="VSP_016324" description="In isoform 4." evidence="8">
    <original>S</original>
    <variation>R</variation>
    <location>
        <position position="449"/>
    </location>
</feature>
<feature type="splice variant" id="VSP_016325" description="In isoform 4." evidence="8">
    <location>
        <begin position="450"/>
        <end position="1423"/>
    </location>
</feature>
<feature type="sequence variant" id="VAR_051758" description="In dbSNP:rs2289629.">
    <original>S</original>
    <variation>L</variation>
    <location>
        <position position="743"/>
    </location>
</feature>
<feature type="sequence variant" id="VAR_051759" description="In dbSNP:rs6505140.">
    <original>V</original>
    <variation>A</variation>
    <location>
        <position position="763"/>
    </location>
</feature>
<feature type="sequence variant" id="VAR_051760" description="In dbSNP:rs8080046.">
    <original>H</original>
    <variation>Q</variation>
    <location>
        <position position="1300"/>
    </location>
</feature>
<feature type="mutagenesis site" description="Abrogates phosphatase activity." evidence="6">
    <original>C</original>
    <variation>S</variation>
    <location>
        <position position="392"/>
    </location>
</feature>
<feature type="strand" evidence="14">
    <location>
        <begin position="309"/>
        <end position="312"/>
    </location>
</feature>
<feature type="strand" evidence="14">
    <location>
        <begin position="315"/>
        <end position="318"/>
    </location>
</feature>
<feature type="helix" evidence="14">
    <location>
        <begin position="320"/>
        <end position="323"/>
    </location>
</feature>
<feature type="helix" evidence="14">
    <location>
        <begin position="326"/>
        <end position="331"/>
    </location>
</feature>
<feature type="strand" evidence="14">
    <location>
        <begin position="334"/>
        <end position="339"/>
    </location>
</feature>
<feature type="strand" evidence="14">
    <location>
        <begin position="342"/>
        <end position="344"/>
    </location>
</feature>
<feature type="strand" evidence="14">
    <location>
        <begin position="352"/>
        <end position="356"/>
    </location>
</feature>
<feature type="helix" evidence="14">
    <location>
        <begin position="368"/>
        <end position="370"/>
    </location>
</feature>
<feature type="helix" evidence="14">
    <location>
        <begin position="371"/>
        <end position="383"/>
    </location>
</feature>
<feature type="strand" evidence="14">
    <location>
        <begin position="387"/>
        <end position="391"/>
    </location>
</feature>
<feature type="strand" evidence="14">
    <location>
        <begin position="393"/>
        <end position="397"/>
    </location>
</feature>
<feature type="helix" evidence="14">
    <location>
        <begin position="398"/>
        <end position="411"/>
    </location>
</feature>
<feature type="helix" evidence="14">
    <location>
        <begin position="415"/>
        <end position="425"/>
    </location>
</feature>
<feature type="helix" evidence="14">
    <location>
        <begin position="433"/>
        <end position="447"/>
    </location>
</feature>
<accession>Q76I76</accession>
<accession>Q8TDB5</accession>
<accession>Q8WYL1</accession>
<accession>Q8WYL2</accession>
<accession>Q96F40</accession>
<accession>Q96H36</accession>
<accession>Q9C0D8</accession>
<dbReference type="EC" id="3.1.3.16"/>
<dbReference type="EC" id="3.1.3.48"/>
<dbReference type="EMBL" id="AB072358">
    <property type="protein sequence ID" value="BAB84117.1"/>
    <property type="molecule type" value="mRNA"/>
</dbReference>
<dbReference type="EMBL" id="AB072359">
    <property type="protein sequence ID" value="BAB84118.1"/>
    <property type="molecule type" value="mRNA"/>
</dbReference>
<dbReference type="EMBL" id="AB099290">
    <property type="protein sequence ID" value="BAC97813.1"/>
    <property type="molecule type" value="mRNA"/>
</dbReference>
<dbReference type="EMBL" id="BC008941">
    <property type="protein sequence ID" value="AAH08941.1"/>
    <property type="molecule type" value="mRNA"/>
</dbReference>
<dbReference type="EMBL" id="BC011636">
    <property type="protein sequence ID" value="AAH11636.2"/>
    <property type="status" value="ALT_INIT"/>
    <property type="molecule type" value="mRNA"/>
</dbReference>
<dbReference type="EMBL" id="BC068223">
    <property type="protein sequence ID" value="AAH68223.1"/>
    <property type="molecule type" value="mRNA"/>
</dbReference>
<dbReference type="EMBL" id="AF484838">
    <property type="protein sequence ID" value="AAL92027.1"/>
    <property type="status" value="ALT_INIT"/>
    <property type="molecule type" value="mRNA"/>
</dbReference>
<dbReference type="EMBL" id="AB051512">
    <property type="protein sequence ID" value="BAB21816.1"/>
    <property type="molecule type" value="mRNA"/>
</dbReference>
<dbReference type="CCDS" id="CCDS11253.1">
    <molecule id="Q76I76-1"/>
</dbReference>
<dbReference type="CCDS" id="CCDS92286.1">
    <molecule id="Q76I76-2"/>
</dbReference>
<dbReference type="RefSeq" id="NP_001269058.1">
    <property type="nucleotide sequence ID" value="NM_001282129.1"/>
</dbReference>
<dbReference type="RefSeq" id="NP_001269059.1">
    <property type="nucleotide sequence ID" value="NM_001282130.1"/>
</dbReference>
<dbReference type="RefSeq" id="NP_001269060.1">
    <property type="nucleotide sequence ID" value="NM_001282131.1"/>
</dbReference>
<dbReference type="RefSeq" id="NP_203747.2">
    <molecule id="Q76I76-1"/>
    <property type="nucleotide sequence ID" value="NM_033389.3"/>
</dbReference>
<dbReference type="RefSeq" id="XP_047292923.1">
    <molecule id="Q76I76-1"/>
    <property type="nucleotide sequence ID" value="XM_047436967.1"/>
</dbReference>
<dbReference type="PDB" id="2NT2">
    <property type="method" value="X-ray"/>
    <property type="resolution" value="2.10 A"/>
    <property type="chains" value="A/B/C=305-449"/>
</dbReference>
<dbReference type="PDBsum" id="2NT2"/>
<dbReference type="SMR" id="Q76I76"/>
<dbReference type="BioGRID" id="124548">
    <property type="interactions" value="47"/>
</dbReference>
<dbReference type="FunCoup" id="Q76I76">
    <property type="interactions" value="798"/>
</dbReference>
<dbReference type="IntAct" id="Q76I76">
    <property type="interactions" value="30"/>
</dbReference>
<dbReference type="MINT" id="Q76I76"/>
<dbReference type="STRING" id="9606.ENSP00000444743"/>
<dbReference type="BindingDB" id="Q76I76"/>
<dbReference type="ChEMBL" id="CHEMBL3351198"/>
<dbReference type="DEPOD" id="SSH2"/>
<dbReference type="GlyGen" id="Q76I76">
    <property type="glycosylation" value="2 sites, 1 O-linked glycan (1 site)"/>
</dbReference>
<dbReference type="iPTMnet" id="Q76I76"/>
<dbReference type="PhosphoSitePlus" id="Q76I76"/>
<dbReference type="BioMuta" id="SSH2"/>
<dbReference type="DMDM" id="74749833"/>
<dbReference type="jPOST" id="Q76I76"/>
<dbReference type="MassIVE" id="Q76I76"/>
<dbReference type="PaxDb" id="9606-ENSP00000444743"/>
<dbReference type="PeptideAtlas" id="Q76I76"/>
<dbReference type="ProteomicsDB" id="68671">
    <molecule id="Q76I76-1"/>
</dbReference>
<dbReference type="ProteomicsDB" id="68673">
    <molecule id="Q76I76-3"/>
</dbReference>
<dbReference type="ProteomicsDB" id="68674">
    <molecule id="Q76I76-4"/>
</dbReference>
<dbReference type="Pumba" id="Q76I76"/>
<dbReference type="Antibodypedia" id="26804">
    <property type="antibodies" value="55 antibodies from 20 providers"/>
</dbReference>
<dbReference type="DNASU" id="85464"/>
<dbReference type="Ensembl" id="ENST00000269033.7">
    <molecule id="Q76I76-1"/>
    <property type="protein sequence ID" value="ENSP00000269033.3"/>
    <property type="gene ID" value="ENSG00000141298.19"/>
</dbReference>
<dbReference type="GeneID" id="85464"/>
<dbReference type="KEGG" id="hsa:85464"/>
<dbReference type="UCSC" id="uc002heo.3">
    <molecule id="Q76I76-1"/>
    <property type="organism name" value="human"/>
</dbReference>
<dbReference type="AGR" id="HGNC:30580"/>
<dbReference type="CTD" id="85464"/>
<dbReference type="DisGeNET" id="85464"/>
<dbReference type="GeneCards" id="SSH2"/>
<dbReference type="HGNC" id="HGNC:30580">
    <property type="gene designation" value="SSH2"/>
</dbReference>
<dbReference type="HPA" id="ENSG00000141298">
    <property type="expression patterns" value="Tissue enhanced (skeletal)"/>
</dbReference>
<dbReference type="MIM" id="606779">
    <property type="type" value="gene"/>
</dbReference>
<dbReference type="neXtProt" id="NX_Q76I76"/>
<dbReference type="OpenTargets" id="ENSG00000141298"/>
<dbReference type="PharmGKB" id="PA134861867"/>
<dbReference type="VEuPathDB" id="HostDB:ENSG00000141298"/>
<dbReference type="eggNOG" id="KOG1716">
    <property type="taxonomic scope" value="Eukaryota"/>
</dbReference>
<dbReference type="GeneTree" id="ENSGT00940000157430"/>
<dbReference type="InParanoid" id="Q76I76"/>
<dbReference type="OrthoDB" id="5779068at2759"/>
<dbReference type="PAN-GO" id="Q76I76">
    <property type="GO annotations" value="5 GO annotations based on evolutionary models"/>
</dbReference>
<dbReference type="PhylomeDB" id="Q76I76"/>
<dbReference type="TreeFam" id="TF319444"/>
<dbReference type="PathwayCommons" id="Q76I76"/>
<dbReference type="SignaLink" id="Q76I76"/>
<dbReference type="SIGNOR" id="Q76I76"/>
<dbReference type="BioGRID-ORCS" id="85464">
    <property type="hits" value="28 hits in 1167 CRISPR screens"/>
</dbReference>
<dbReference type="ChiTaRS" id="SSH2">
    <property type="organism name" value="human"/>
</dbReference>
<dbReference type="EvolutionaryTrace" id="Q76I76"/>
<dbReference type="GeneWiki" id="SSH2"/>
<dbReference type="GenomeRNAi" id="85464"/>
<dbReference type="Pharos" id="Q76I76">
    <property type="development level" value="Tbio"/>
</dbReference>
<dbReference type="PRO" id="PR:Q76I76"/>
<dbReference type="Proteomes" id="UP000005640">
    <property type="component" value="Chromosome 17"/>
</dbReference>
<dbReference type="RNAct" id="Q76I76">
    <property type="molecule type" value="protein"/>
</dbReference>
<dbReference type="Bgee" id="ENSG00000141298">
    <property type="expression patterns" value="Expressed in tibialis anterior and 180 other cell types or tissues"/>
</dbReference>
<dbReference type="ExpressionAtlas" id="Q76I76">
    <property type="expression patterns" value="baseline and differential"/>
</dbReference>
<dbReference type="GO" id="GO:0001669">
    <property type="term" value="C:acrosomal vesicle"/>
    <property type="evidence" value="ECO:0007669"/>
    <property type="project" value="UniProtKB-SubCell"/>
</dbReference>
<dbReference type="GO" id="GO:0005737">
    <property type="term" value="C:cytoplasm"/>
    <property type="evidence" value="ECO:0000318"/>
    <property type="project" value="GO_Central"/>
</dbReference>
<dbReference type="GO" id="GO:0005856">
    <property type="term" value="C:cytoskeleton"/>
    <property type="evidence" value="ECO:0007669"/>
    <property type="project" value="UniProtKB-SubCell"/>
</dbReference>
<dbReference type="GO" id="GO:0005615">
    <property type="term" value="C:extracellular space"/>
    <property type="evidence" value="ECO:0007005"/>
    <property type="project" value="UniProtKB"/>
</dbReference>
<dbReference type="GO" id="GO:0005925">
    <property type="term" value="C:focal adhesion"/>
    <property type="evidence" value="ECO:0007669"/>
    <property type="project" value="UniProtKB-SubCell"/>
</dbReference>
<dbReference type="GO" id="GO:0003779">
    <property type="term" value="F:actin binding"/>
    <property type="evidence" value="ECO:0000314"/>
    <property type="project" value="UniProtKB"/>
</dbReference>
<dbReference type="GO" id="GO:0004721">
    <property type="term" value="F:phosphoprotein phosphatase activity"/>
    <property type="evidence" value="ECO:0000314"/>
    <property type="project" value="UniProtKB"/>
</dbReference>
<dbReference type="GO" id="GO:0004722">
    <property type="term" value="F:protein serine/threonine phosphatase activity"/>
    <property type="evidence" value="ECO:0007669"/>
    <property type="project" value="UniProtKB-EC"/>
</dbReference>
<dbReference type="GO" id="GO:0004725">
    <property type="term" value="F:protein tyrosine phosphatase activity"/>
    <property type="evidence" value="ECO:0007669"/>
    <property type="project" value="UniProtKB-EC"/>
</dbReference>
<dbReference type="GO" id="GO:0030036">
    <property type="term" value="P:actin cytoskeleton organization"/>
    <property type="evidence" value="ECO:0000315"/>
    <property type="project" value="UniProtKB"/>
</dbReference>
<dbReference type="GO" id="GO:0030154">
    <property type="term" value="P:cell differentiation"/>
    <property type="evidence" value="ECO:0007669"/>
    <property type="project" value="UniProtKB-KW"/>
</dbReference>
<dbReference type="GO" id="GO:0030837">
    <property type="term" value="P:negative regulation of actin filament polymerization"/>
    <property type="evidence" value="ECO:0000318"/>
    <property type="project" value="GO_Central"/>
</dbReference>
<dbReference type="GO" id="GO:0006470">
    <property type="term" value="P:protein dephosphorylation"/>
    <property type="evidence" value="ECO:0000315"/>
    <property type="project" value="UniProtKB"/>
</dbReference>
<dbReference type="GO" id="GO:0007283">
    <property type="term" value="P:spermatogenesis"/>
    <property type="evidence" value="ECO:0007669"/>
    <property type="project" value="UniProtKB-KW"/>
</dbReference>
<dbReference type="CDD" id="cd14569">
    <property type="entry name" value="DSP_slingshot_2"/>
    <property type="match status" value="1"/>
</dbReference>
<dbReference type="CDD" id="cd11652">
    <property type="entry name" value="SSH-N"/>
    <property type="match status" value="1"/>
</dbReference>
<dbReference type="FunFam" id="3.90.190.10:FF:000004">
    <property type="entry name" value="Protein phosphatase Slingshot homolog 2"/>
    <property type="match status" value="1"/>
</dbReference>
<dbReference type="Gene3D" id="3.90.190.10">
    <property type="entry name" value="Protein tyrosine phosphatase superfamily"/>
    <property type="match status" value="1"/>
</dbReference>
<dbReference type="InterPro" id="IPR014876">
    <property type="entry name" value="DEK_C"/>
</dbReference>
<dbReference type="InterPro" id="IPR000340">
    <property type="entry name" value="Dual-sp_phosphatase_cat-dom"/>
</dbReference>
<dbReference type="InterPro" id="IPR043587">
    <property type="entry name" value="Phosphatase_SSH-like"/>
</dbReference>
<dbReference type="InterPro" id="IPR029021">
    <property type="entry name" value="Prot-tyrosine_phosphatase-like"/>
</dbReference>
<dbReference type="InterPro" id="IPR043588">
    <property type="entry name" value="SSH-N"/>
</dbReference>
<dbReference type="InterPro" id="IPR016130">
    <property type="entry name" value="Tyr_Pase_AS"/>
</dbReference>
<dbReference type="InterPro" id="IPR000387">
    <property type="entry name" value="Tyr_Pase_dom"/>
</dbReference>
<dbReference type="InterPro" id="IPR020422">
    <property type="entry name" value="TYR_PHOSPHATASE_DUAL_dom"/>
</dbReference>
<dbReference type="PANTHER" id="PTHR45864:SF3">
    <property type="entry name" value="PROTEIN PHOSPHATASE SLINGSHOT HOMOLOG 2"/>
    <property type="match status" value="1"/>
</dbReference>
<dbReference type="PANTHER" id="PTHR45864">
    <property type="entry name" value="SLINGSHOT PROTEIN PHOSPHATASE HOMOLOG"/>
    <property type="match status" value="1"/>
</dbReference>
<dbReference type="Pfam" id="PF08766">
    <property type="entry name" value="DEK_C"/>
    <property type="match status" value="1"/>
</dbReference>
<dbReference type="Pfam" id="PF00782">
    <property type="entry name" value="DSPc"/>
    <property type="match status" value="1"/>
</dbReference>
<dbReference type="Pfam" id="PF23040">
    <property type="entry name" value="PH_SSH1-like_1st"/>
    <property type="match status" value="1"/>
</dbReference>
<dbReference type="SMART" id="SM00195">
    <property type="entry name" value="DSPc"/>
    <property type="match status" value="1"/>
</dbReference>
<dbReference type="SUPFAM" id="SSF52799">
    <property type="entry name" value="(Phosphotyrosine protein) phosphatases II"/>
    <property type="match status" value="1"/>
</dbReference>
<dbReference type="PROSITE" id="PS51998">
    <property type="entry name" value="DEK_C"/>
    <property type="match status" value="1"/>
</dbReference>
<dbReference type="PROSITE" id="PS00383">
    <property type="entry name" value="TYR_PHOSPHATASE_1"/>
    <property type="match status" value="1"/>
</dbReference>
<dbReference type="PROSITE" id="PS50056">
    <property type="entry name" value="TYR_PHOSPHATASE_2"/>
    <property type="match status" value="1"/>
</dbReference>
<dbReference type="PROSITE" id="PS50054">
    <property type="entry name" value="TYR_PHOSPHATASE_DUAL"/>
    <property type="match status" value="1"/>
</dbReference>
<reference key="1">
    <citation type="journal article" date="2002" name="Cell">
        <title>Control of actin reorganization by Slingshot, a family of phosphatases that dephosphorylate ADF/cofilin.</title>
        <authorList>
            <person name="Niwa R."/>
            <person name="Nagata-Ohashi K."/>
            <person name="Takeichi M."/>
            <person name="Mizuno K."/>
            <person name="Uemura T."/>
        </authorList>
    </citation>
    <scope>NUCLEOTIDE SEQUENCE [MRNA] (ISOFORMS 3 AND 4)</scope>
    <scope>FUNCTION</scope>
    <scope>INTERACTION WITH ACTIN</scope>
    <scope>MUTAGENESIS OF CYS-392</scope>
</reference>
<reference key="2">
    <citation type="journal article" date="2003" name="Genes Cells">
        <title>Differential activities, subcellular distribution and tissue expression patterns of three members of Slingshot family phosphatases that dephosphorylate cofilin.</title>
        <authorList>
            <person name="Ohta Y."/>
            <person name="Kousaka K."/>
            <person name="Nagata-Ohashi K."/>
            <person name="Ohashi K."/>
            <person name="Muramoto A."/>
            <person name="Shima Y."/>
            <person name="Niwa R."/>
            <person name="Uemura T."/>
            <person name="Mizuno K."/>
        </authorList>
    </citation>
    <scope>NUCLEOTIDE SEQUENCE [MRNA] (ISOFORM 1)</scope>
</reference>
<reference key="3">
    <citation type="journal article" date="2004" name="Genome Res.">
        <title>The status, quality, and expansion of the NIH full-length cDNA project: the Mammalian Gene Collection (MGC).</title>
        <authorList>
            <consortium name="The MGC Project Team"/>
        </authorList>
    </citation>
    <scope>NUCLEOTIDE SEQUENCE [LARGE SCALE MRNA] (ISOFORMS 2 AND 3)</scope>
    <source>
        <tissue>Brain</tissue>
        <tissue>Lung</tissue>
    </source>
</reference>
<reference key="4">
    <citation type="journal article" date="2003" name="Chin. Med. J.">
        <title>Identification of genes expressed during myocardial development.</title>
        <authorList>
            <person name="Chan S.Y."/>
            <person name="Chan A.K.W."/>
            <person name="Cheung B.P.K."/>
            <person name="Liang Y."/>
            <person name="Leung M.P."/>
        </authorList>
    </citation>
    <scope>NUCLEOTIDE SEQUENCE [MRNA] OF 282-409 (ISOFORMS 1/4)</scope>
</reference>
<reference key="5">
    <citation type="journal article" date="2000" name="DNA Res.">
        <title>Prediction of the coding sequences of unidentified human genes. XIX. The complete sequences of 100 new cDNA clones from brain which code for large proteins in vitro.</title>
        <authorList>
            <person name="Nagase T."/>
            <person name="Kikuno R."/>
            <person name="Hattori A."/>
            <person name="Kondo Y."/>
            <person name="Okumura K."/>
            <person name="Ohara O."/>
        </authorList>
    </citation>
    <scope>NUCLEOTIDE SEQUENCE [LARGE SCALE MRNA] OF 382-1423 (ISOFORM 1)</scope>
    <source>
        <tissue>Brain</tissue>
    </source>
</reference>
<reference key="6">
    <citation type="journal article" date="2008" name="Proc. Natl. Acad. Sci. U.S.A.">
        <title>A quantitative atlas of mitotic phosphorylation.</title>
        <authorList>
            <person name="Dephoure N."/>
            <person name="Zhou C."/>
            <person name="Villen J."/>
            <person name="Beausoleil S.A."/>
            <person name="Bakalarski C.E."/>
            <person name="Elledge S.J."/>
            <person name="Gygi S.P."/>
        </authorList>
    </citation>
    <scope>PHOSPHORYLATION [LARGE SCALE ANALYSIS] AT SER-36 AND THR-1422</scope>
    <scope>IDENTIFICATION BY MASS SPECTROMETRY [LARGE SCALE ANALYSIS]</scope>
    <source>
        <tissue>Cervix carcinoma</tissue>
    </source>
</reference>
<reference key="7">
    <citation type="journal article" date="2009" name="Anal. Chem.">
        <title>Lys-N and trypsin cover complementary parts of the phosphoproteome in a refined SCX-based approach.</title>
        <authorList>
            <person name="Gauci S."/>
            <person name="Helbig A.O."/>
            <person name="Slijper M."/>
            <person name="Krijgsveld J."/>
            <person name="Heck A.J."/>
            <person name="Mohammed S."/>
        </authorList>
    </citation>
    <scope>IDENTIFICATION BY MASS SPECTROMETRY [LARGE SCALE ANALYSIS]</scope>
</reference>
<reference key="8">
    <citation type="journal article" date="2009" name="Sci. Signal.">
        <title>Quantitative phosphoproteomic analysis of T cell receptor signaling reveals system-wide modulation of protein-protein interactions.</title>
        <authorList>
            <person name="Mayya V."/>
            <person name="Lundgren D.H."/>
            <person name="Hwang S.-I."/>
            <person name="Rezaul K."/>
            <person name="Wu L."/>
            <person name="Eng J.K."/>
            <person name="Rodionov V."/>
            <person name="Han D.K."/>
        </authorList>
    </citation>
    <scope>PHOSPHORYLATION [LARGE SCALE ANALYSIS] AT SER-487 AND THR-1422</scope>
    <scope>IDENTIFICATION BY MASS SPECTROMETRY [LARGE SCALE ANALYSIS]</scope>
    <source>
        <tissue>Leukemic T-cell</tissue>
    </source>
</reference>
<reference key="9">
    <citation type="journal article" date="2010" name="Sci. Signal.">
        <title>Quantitative phosphoproteomics reveals widespread full phosphorylation site occupancy during mitosis.</title>
        <authorList>
            <person name="Olsen J.V."/>
            <person name="Vermeulen M."/>
            <person name="Santamaria A."/>
            <person name="Kumar C."/>
            <person name="Miller M.L."/>
            <person name="Jensen L.J."/>
            <person name="Gnad F."/>
            <person name="Cox J."/>
            <person name="Jensen T.S."/>
            <person name="Nigg E.A."/>
            <person name="Brunak S."/>
            <person name="Mann M."/>
        </authorList>
    </citation>
    <scope>IDENTIFICATION BY MASS SPECTROMETRY [LARGE SCALE ANALYSIS]</scope>
    <source>
        <tissue>Cervix carcinoma</tissue>
    </source>
</reference>
<reference key="10">
    <citation type="journal article" date="2013" name="J. Proteome Res.">
        <title>Toward a comprehensive characterization of a human cancer cell phosphoproteome.</title>
        <authorList>
            <person name="Zhou H."/>
            <person name="Di Palma S."/>
            <person name="Preisinger C."/>
            <person name="Peng M."/>
            <person name="Polat A.N."/>
            <person name="Heck A.J."/>
            <person name="Mohammed S."/>
        </authorList>
    </citation>
    <scope>PHOSPHORYLATION [LARGE SCALE ANALYSIS] AT SER-36 AND SER-1217</scope>
    <scope>IDENTIFICATION BY MASS SPECTROMETRY [LARGE SCALE ANALYSIS]</scope>
    <source>
        <tissue>Cervix carcinoma</tissue>
        <tissue>Erythroleukemia</tissue>
    </source>
</reference>
<reference key="11">
    <citation type="journal article" date="2014" name="J. Proteomics">
        <title>An enzyme assisted RP-RPLC approach for in-depth analysis of human liver phosphoproteome.</title>
        <authorList>
            <person name="Bian Y."/>
            <person name="Song C."/>
            <person name="Cheng K."/>
            <person name="Dong M."/>
            <person name="Wang F."/>
            <person name="Huang J."/>
            <person name="Sun D."/>
            <person name="Wang L."/>
            <person name="Ye M."/>
            <person name="Zou H."/>
        </authorList>
    </citation>
    <scope>IDENTIFICATION BY MASS SPECTROMETRY [LARGE SCALE ANALYSIS]</scope>
    <source>
        <tissue>Liver</tissue>
    </source>
</reference>
<reference key="12">
    <citation type="journal article" date="2007" name="Proteins">
        <title>Crystal structure of human slingshot phosphatase 2.</title>
        <authorList>
            <person name="Jung S.K."/>
            <person name="Jeong D.G."/>
            <person name="Yoon T.S."/>
            <person name="Kim J.H."/>
            <person name="Ryu S.E."/>
            <person name="Kim S.J."/>
        </authorList>
    </citation>
    <scope>X-RAY CRYSTALLOGRAPHY (2.1 ANGSTROMS) OF 305-448</scope>
    <scope>ACTIVE SITE</scope>
</reference>
<proteinExistence type="evidence at protein level"/>
<protein>
    <recommendedName>
        <fullName>Protein phosphatase Slingshot homolog 2</fullName>
        <ecNumber>3.1.3.16</ecNumber>
        <ecNumber>3.1.3.48</ecNumber>
    </recommendedName>
    <alternativeName>
        <fullName>SSH-like protein 2</fullName>
        <shortName>SSH-2L</shortName>
        <shortName>hSSH-2L</shortName>
    </alternativeName>
</protein>
<gene>
    <name type="primary">SSH2</name>
    <name type="synonym">KIAA1725</name>
    <name type="synonym">SSH2L</name>
</gene>
<sequence length="1423" mass="158216">MALVTVQRSPTPSTTSSPCASEADSGEEECRSQPRSISESFLTVKGAALFLPRGNGSSTPRISHRRNKHAGDLQQHLQAMFILLRPEDNIRLAVRLESTYQNRTRYMVVVSTNGRQDTEESIVLGMDFSSNDSSTCTMGLVLPLWSDTLIHLDGDGGFSVSTDNRVHIFKPVSVQAMWSALQSLHKACEVARAHNYYPGSLFLTWVSYYESHINSDQSSVNEWNAMQDVQSHRPDSPALFTDIPTERERTERLIKTKLREIMMQKDLENITSKEIRTELEMQMVCNLREFKEFIDNEMIVILGQMDSPTQIFEHVFLGSEWNASNLEDLQNRGVRYILNVTREIDNFFPGVFEYHNIRVYDEEATDLLAYWNDTYKFISKAKKHGSKCLVHCKMGVSRSASTVIAYAMKEYGWNLDRAYDYVKERRTVTKPNPSFMRQLEEYQGILLASKQRHNKLWRSHSDSDLSDHHEPICKPGLELNKKDITTSADQIAEVKTMESHPPIPPVFVEHMVPQDANQKGLCTKERMICLEFTSREFHAGQIEDELNLNDINGCSSGCCLNESKFPLDNCHASKALIQPGHVPEMANKFPDLTVEDLETDALKADMNVHLLPMEELTSPLKDPPMSPDPESPSPQPSCQTEISDFSTDRIDFFSALEKFVELSQETRSRSFSHSRMEELGGGRNESCRLSVVEVAPSKVTADDQRSSSLSNTPHASEESSMDEEQSKAISELVSPDIFMQSHSENAISVKEIVTEIESISQGVGQIQLKGDILPNPCHTPKKNSIHELLLERAQTPENKPGHMEQDEDSCTAQPELAKDSGMCNPEGCLTTHSSIADLEEGEPAEGEQELQGSGMHPGAKWYPGSVRRATLEFEERLRQEQEHHGAAPTCTSLSTRKNSKNDSSVADLAPKGKSDEAPPEHSFVLKEPEMSKGKGKYSGSEAGSLSHSEQNATVPAPRVLEFDHLPDPQEGPGSDTGTQQEGVLKDLRTVIPYQESETQAVPLPLPKRVEIIEYTHIVTSPNHTGPGSEIATSEKSGEQGLRKVNMEKSVTVLCTLDENLNRTLDPNQVSLHPQVLPLPHSSSPEHNRPTDHPTSILSSPEDRGSSLSTALETAAPFVSHTTHLLSASLDYLHPQTMVHLEGFTEQSSTTDEPSAEQVSWEESQESPLSSGSEVPYKDSQLSSADLSLISKLGDNTGELQEKMDPLPVACRLPHSSSSENIKSLSHSPGVVKERAKEIESRVVFQAGLTKPSQMRRSASLAKLGYLDLCKDCLPEREPASCESPHLKLLQPFLRTDSGMHAMEDQESLENPGAPHNPEPTKSFVEQLTTTECIVQSKPVERPLVQYAKEFGSSQQYLLPRAGLELTSSEGGLPVLQTQGLQCACPAPGLAVAPRQQHGRTHPLRRLKKANDKKRTTNPFYNTM</sequence>
<comment type="function">
    <text evidence="1 6">Protein phosphatase which regulates actin filament dynamics. Dephosphorylates and activates the actin binding/depolymerizing factor cofilin, which subsequently binds to actin filaments and stimulates their disassembly. Inhibitory phosphorylation of cofilin is mediated by LIMK1, which may also be dephosphorylated and inactivated by this protein (PubMed:11832213). Required for spermatogenesis (By similarity). Involved in acrosome biogenesis, probably by regulating cofilin-mediated actin cytoskeleton remodeling during proacrosomal vesicle fusion and/or Golgi to perinuclear vesicle trafficking (By similarity).</text>
</comment>
<comment type="catalytic activity">
    <reaction evidence="4">
        <text>O-phospho-L-tyrosyl-[protein] + H2O = L-tyrosyl-[protein] + phosphate</text>
        <dbReference type="Rhea" id="RHEA:10684"/>
        <dbReference type="Rhea" id="RHEA-COMP:10136"/>
        <dbReference type="Rhea" id="RHEA-COMP:20101"/>
        <dbReference type="ChEBI" id="CHEBI:15377"/>
        <dbReference type="ChEBI" id="CHEBI:43474"/>
        <dbReference type="ChEBI" id="CHEBI:46858"/>
        <dbReference type="ChEBI" id="CHEBI:61978"/>
        <dbReference type="EC" id="3.1.3.48"/>
    </reaction>
</comment>
<comment type="catalytic activity">
    <reaction>
        <text>O-phospho-L-seryl-[protein] + H2O = L-seryl-[protein] + phosphate</text>
        <dbReference type="Rhea" id="RHEA:20629"/>
        <dbReference type="Rhea" id="RHEA-COMP:9863"/>
        <dbReference type="Rhea" id="RHEA-COMP:11604"/>
        <dbReference type="ChEBI" id="CHEBI:15377"/>
        <dbReference type="ChEBI" id="CHEBI:29999"/>
        <dbReference type="ChEBI" id="CHEBI:43474"/>
        <dbReference type="ChEBI" id="CHEBI:83421"/>
        <dbReference type="EC" id="3.1.3.16"/>
    </reaction>
</comment>
<comment type="catalytic activity">
    <reaction>
        <text>O-phospho-L-threonyl-[protein] + H2O = L-threonyl-[protein] + phosphate</text>
        <dbReference type="Rhea" id="RHEA:47004"/>
        <dbReference type="Rhea" id="RHEA-COMP:11060"/>
        <dbReference type="Rhea" id="RHEA-COMP:11605"/>
        <dbReference type="ChEBI" id="CHEBI:15377"/>
        <dbReference type="ChEBI" id="CHEBI:30013"/>
        <dbReference type="ChEBI" id="CHEBI:43474"/>
        <dbReference type="ChEBI" id="CHEBI:61977"/>
        <dbReference type="EC" id="3.1.3.16"/>
    </reaction>
</comment>
<comment type="subunit">
    <text evidence="6">Interacts with filamentous actin.</text>
</comment>
<comment type="interaction">
    <interactant intactId="EBI-10977847">
        <id>Q76I76</id>
    </interactant>
    <interactant intactId="EBI-310559">
        <id>Q9ULT8</id>
        <label>HECTD1</label>
    </interactant>
    <organismsDiffer>false</organismsDiffer>
    <experiments>2</experiments>
</comment>
<comment type="subcellular location">
    <subcellularLocation>
        <location evidence="1">Cytoplasm</location>
    </subcellularLocation>
    <subcellularLocation>
        <location evidence="1">Cytoplasm</location>
        <location evidence="1">Cytoskeleton</location>
    </subcellularLocation>
    <subcellularLocation>
        <location evidence="1">Cell junction</location>
        <location evidence="1">Focal adhesion</location>
    </subcellularLocation>
    <subcellularLocation>
        <location evidence="1">Cytoplasmic vesicle</location>
        <location evidence="1">Secretory vesicle</location>
        <location evidence="1">Acrosome</location>
    </subcellularLocation>
    <text evidence="1">Colocalizes with filamentous actin in the cytoplasm and the cell periphery.</text>
</comment>
<comment type="alternative products">
    <event type="alternative splicing"/>
    <isoform>
        <id>Q76I76-1</id>
        <name>1</name>
        <name>L</name>
        <sequence type="displayed"/>
    </isoform>
    <isoform>
        <id>Q76I76-2</id>
        <name>2</name>
        <sequence type="described" ref="VSP_016321 VSP_016322 VSP_016323"/>
    </isoform>
    <isoform>
        <id>Q76I76-3</id>
        <name>3</name>
        <name>A</name>
        <sequence type="described" ref="VSP_016322 VSP_016323"/>
    </isoform>
    <isoform>
        <id>Q76I76-4</id>
        <name>4</name>
        <sequence type="described" ref="VSP_016324 VSP_016325"/>
    </isoform>
</comment>
<comment type="miscellaneous">
    <text>Tyrosine phosphatase activity has not been demonstrated for this protein to date.</text>
</comment>
<comment type="similarity">
    <text evidence="10">Belongs to the protein-tyrosine phosphatase family.</text>
</comment>
<comment type="sequence caution" evidence="10">
    <conflict type="erroneous initiation">
        <sequence resource="EMBL-CDS" id="AAH11636"/>
    </conflict>
</comment>
<comment type="sequence caution" evidence="10">
    <conflict type="erroneous initiation">
        <sequence resource="EMBL-CDS" id="AAL92027"/>
    </conflict>
</comment>